<evidence type="ECO:0000255" key="1">
    <source>
        <dbReference type="HAMAP-Rule" id="MF_00137"/>
    </source>
</evidence>
<keyword id="KW-0067">ATP-binding</keyword>
<keyword id="KW-0436">Ligase</keyword>
<keyword id="KW-0547">Nucleotide-binding</keyword>
<keyword id="KW-0658">Purine biosynthesis</keyword>
<keyword id="KW-1185">Reference proteome</keyword>
<organism>
    <name type="scientific">Acidithiobacillus ferrooxidans (strain ATCC 23270 / DSM 14882 / CIP 104768 / NCIMB 8455)</name>
    <name type="common">Ferrobacillus ferrooxidans (strain ATCC 23270)</name>
    <dbReference type="NCBI Taxonomy" id="243159"/>
    <lineage>
        <taxon>Bacteria</taxon>
        <taxon>Pseudomonadati</taxon>
        <taxon>Pseudomonadota</taxon>
        <taxon>Acidithiobacillia</taxon>
        <taxon>Acidithiobacillales</taxon>
        <taxon>Acidithiobacillaceae</taxon>
        <taxon>Acidithiobacillus</taxon>
    </lineage>
</organism>
<sequence>MNERIALYEGKAKIVYASESPDELVLHFKDDTSAFDGEKVEQLAHKGEINNAFNAFIMEYLQGEGVPTHFIRRLNARESLVRRLEMIPVECVVRNRAAGSLSKRLGIEEGRVLEPPTLEFFLKNDALHDPMINTSHIRTFGWATAEEVEAMRRWTMRVNMLLSALFAKANLILVDFKLEFGRFDGELYLGDEFSPDGCRLWDALSLEKMDKDRFRRGLGGVVEAYAEVARRLGVPLPAAS</sequence>
<reference key="1">
    <citation type="journal article" date="2008" name="BMC Genomics">
        <title>Acidithiobacillus ferrooxidans metabolism: from genome sequence to industrial applications.</title>
        <authorList>
            <person name="Valdes J."/>
            <person name="Pedroso I."/>
            <person name="Quatrini R."/>
            <person name="Dodson R.J."/>
            <person name="Tettelin H."/>
            <person name="Blake R. II"/>
            <person name="Eisen J.A."/>
            <person name="Holmes D.S."/>
        </authorList>
    </citation>
    <scope>NUCLEOTIDE SEQUENCE [LARGE SCALE GENOMIC DNA]</scope>
    <source>
        <strain>ATCC 23270 / DSM 14882 / CIP 104768 / NCIMB 8455</strain>
    </source>
</reference>
<proteinExistence type="inferred from homology"/>
<protein>
    <recommendedName>
        <fullName evidence="1">Phosphoribosylaminoimidazole-succinocarboxamide synthase</fullName>
        <ecNumber evidence="1">6.3.2.6</ecNumber>
    </recommendedName>
    <alternativeName>
        <fullName evidence="1">SAICAR synthetase</fullName>
    </alternativeName>
</protein>
<comment type="catalytic activity">
    <reaction evidence="1">
        <text>5-amino-1-(5-phospho-D-ribosyl)imidazole-4-carboxylate + L-aspartate + ATP = (2S)-2-[5-amino-1-(5-phospho-beta-D-ribosyl)imidazole-4-carboxamido]succinate + ADP + phosphate + 2 H(+)</text>
        <dbReference type="Rhea" id="RHEA:22628"/>
        <dbReference type="ChEBI" id="CHEBI:15378"/>
        <dbReference type="ChEBI" id="CHEBI:29991"/>
        <dbReference type="ChEBI" id="CHEBI:30616"/>
        <dbReference type="ChEBI" id="CHEBI:43474"/>
        <dbReference type="ChEBI" id="CHEBI:58443"/>
        <dbReference type="ChEBI" id="CHEBI:77657"/>
        <dbReference type="ChEBI" id="CHEBI:456216"/>
        <dbReference type="EC" id="6.3.2.6"/>
    </reaction>
</comment>
<comment type="pathway">
    <text evidence="1">Purine metabolism; IMP biosynthesis via de novo pathway; 5-amino-1-(5-phospho-D-ribosyl)imidazole-4-carboxamide from 5-amino-1-(5-phospho-D-ribosyl)imidazole-4-carboxylate: step 1/2.</text>
</comment>
<comment type="similarity">
    <text evidence="1">Belongs to the SAICAR synthetase family.</text>
</comment>
<feature type="chain" id="PRO_1000117820" description="Phosphoribosylaminoimidazole-succinocarboxamide synthase">
    <location>
        <begin position="1"/>
        <end position="240"/>
    </location>
</feature>
<gene>
    <name evidence="1" type="primary">purC</name>
    <name type="ordered locus">AFE_2355</name>
</gene>
<accession>B7J6C1</accession>
<name>PUR7_ACIF2</name>
<dbReference type="EC" id="6.3.2.6" evidence="1"/>
<dbReference type="EMBL" id="CP001219">
    <property type="protein sequence ID" value="ACK78311.1"/>
    <property type="molecule type" value="Genomic_DNA"/>
</dbReference>
<dbReference type="RefSeq" id="WP_012537146.1">
    <property type="nucleotide sequence ID" value="NC_011761.1"/>
</dbReference>
<dbReference type="SMR" id="B7J6C1"/>
<dbReference type="STRING" id="243159.AFE_2355"/>
<dbReference type="PaxDb" id="243159-AFE_2355"/>
<dbReference type="GeneID" id="65281448"/>
<dbReference type="KEGG" id="afr:AFE_2355"/>
<dbReference type="eggNOG" id="COG0152">
    <property type="taxonomic scope" value="Bacteria"/>
</dbReference>
<dbReference type="HOGENOM" id="CLU_061495_2_0_6"/>
<dbReference type="UniPathway" id="UPA00074">
    <property type="reaction ID" value="UER00131"/>
</dbReference>
<dbReference type="Proteomes" id="UP000001362">
    <property type="component" value="Chromosome"/>
</dbReference>
<dbReference type="GO" id="GO:0005829">
    <property type="term" value="C:cytosol"/>
    <property type="evidence" value="ECO:0007669"/>
    <property type="project" value="TreeGrafter"/>
</dbReference>
<dbReference type="GO" id="GO:0005524">
    <property type="term" value="F:ATP binding"/>
    <property type="evidence" value="ECO:0007669"/>
    <property type="project" value="UniProtKB-KW"/>
</dbReference>
<dbReference type="GO" id="GO:0004639">
    <property type="term" value="F:phosphoribosylaminoimidazolesuccinocarboxamide synthase activity"/>
    <property type="evidence" value="ECO:0007669"/>
    <property type="project" value="UniProtKB-UniRule"/>
</dbReference>
<dbReference type="GO" id="GO:0006189">
    <property type="term" value="P:'de novo' IMP biosynthetic process"/>
    <property type="evidence" value="ECO:0007669"/>
    <property type="project" value="UniProtKB-UniRule"/>
</dbReference>
<dbReference type="GO" id="GO:0009236">
    <property type="term" value="P:cobalamin biosynthetic process"/>
    <property type="evidence" value="ECO:0007669"/>
    <property type="project" value="InterPro"/>
</dbReference>
<dbReference type="CDD" id="cd01415">
    <property type="entry name" value="SAICAR_synt_PurC"/>
    <property type="match status" value="1"/>
</dbReference>
<dbReference type="FunFam" id="3.30.470.20:FF:000006">
    <property type="entry name" value="Phosphoribosylaminoimidazole-succinocarboxamide synthase"/>
    <property type="match status" value="1"/>
</dbReference>
<dbReference type="Gene3D" id="3.30.470.20">
    <property type="entry name" value="ATP-grasp fold, B domain"/>
    <property type="match status" value="1"/>
</dbReference>
<dbReference type="Gene3D" id="3.30.200.20">
    <property type="entry name" value="Phosphorylase Kinase, domain 1"/>
    <property type="match status" value="1"/>
</dbReference>
<dbReference type="HAMAP" id="MF_00137">
    <property type="entry name" value="SAICAR_synth"/>
    <property type="match status" value="1"/>
</dbReference>
<dbReference type="InterPro" id="IPR028923">
    <property type="entry name" value="SAICAR_synt/ADE2_N"/>
</dbReference>
<dbReference type="InterPro" id="IPR033934">
    <property type="entry name" value="SAICAR_synt_PurC"/>
</dbReference>
<dbReference type="InterPro" id="IPR001636">
    <property type="entry name" value="SAICAR_synth"/>
</dbReference>
<dbReference type="InterPro" id="IPR050089">
    <property type="entry name" value="SAICAR_synthetase"/>
</dbReference>
<dbReference type="InterPro" id="IPR018236">
    <property type="entry name" value="SAICAR_synthetase_CS"/>
</dbReference>
<dbReference type="NCBIfam" id="TIGR00081">
    <property type="entry name" value="purC"/>
    <property type="match status" value="1"/>
</dbReference>
<dbReference type="PANTHER" id="PTHR43599">
    <property type="entry name" value="MULTIFUNCTIONAL PROTEIN ADE2"/>
    <property type="match status" value="1"/>
</dbReference>
<dbReference type="PANTHER" id="PTHR43599:SF3">
    <property type="entry name" value="SI:DKEY-6E2.2"/>
    <property type="match status" value="1"/>
</dbReference>
<dbReference type="Pfam" id="PF01259">
    <property type="entry name" value="SAICAR_synt"/>
    <property type="match status" value="1"/>
</dbReference>
<dbReference type="SUPFAM" id="SSF56104">
    <property type="entry name" value="SAICAR synthase-like"/>
    <property type="match status" value="1"/>
</dbReference>
<dbReference type="PROSITE" id="PS01057">
    <property type="entry name" value="SAICAR_SYNTHETASE_1"/>
    <property type="match status" value="1"/>
</dbReference>
<dbReference type="PROSITE" id="PS01058">
    <property type="entry name" value="SAICAR_SYNTHETASE_2"/>
    <property type="match status" value="1"/>
</dbReference>